<sequence>MSIEERVKKIIVEQLGVKEDDVKPEASFIEDLGADSLDTVELVMALEEEFDIEIPDEEAEKITTVQSAIDYVQNNQ</sequence>
<reference key="1">
    <citation type="submission" date="2008-02" db="EMBL/GenBank/DDBJ databases">
        <title>Complete sequence of Haemophilus somnus 2336.</title>
        <authorList>
            <consortium name="US DOE Joint Genome Institute"/>
            <person name="Siddaramappa S."/>
            <person name="Duncan A.J."/>
            <person name="Challacombe J.F."/>
            <person name="Rainey D."/>
            <person name="Gillaspy A.F."/>
            <person name="Carson M."/>
            <person name="Gipson J."/>
            <person name="Gipson M."/>
            <person name="Bruce D."/>
            <person name="Detter J.C."/>
            <person name="Han C.S."/>
            <person name="Land M."/>
            <person name="Tapia R."/>
            <person name="Thompson L.S."/>
            <person name="Orvis J."/>
            <person name="Zaitshik J."/>
            <person name="Barnes G."/>
            <person name="Brettin T.S."/>
            <person name="Dyer D.W."/>
            <person name="Inzana T.J."/>
        </authorList>
    </citation>
    <scope>NUCLEOTIDE SEQUENCE [LARGE SCALE GENOMIC DNA]</scope>
    <source>
        <strain>2336</strain>
    </source>
</reference>
<proteinExistence type="inferred from homology"/>
<feature type="chain" id="PRO_1000085604" description="Acyl carrier protein">
    <location>
        <begin position="1"/>
        <end position="76"/>
    </location>
</feature>
<feature type="domain" description="Carrier" evidence="2">
    <location>
        <begin position="1"/>
        <end position="76"/>
    </location>
</feature>
<feature type="modified residue" description="O-(pantetheine 4'-phosphoryl)serine" evidence="2">
    <location>
        <position position="36"/>
    </location>
</feature>
<protein>
    <recommendedName>
        <fullName evidence="1">Acyl carrier protein</fullName>
        <shortName evidence="1">ACP</shortName>
    </recommendedName>
</protein>
<accession>B0UUZ3</accession>
<evidence type="ECO:0000255" key="1">
    <source>
        <dbReference type="HAMAP-Rule" id="MF_01217"/>
    </source>
</evidence>
<evidence type="ECO:0000255" key="2">
    <source>
        <dbReference type="PROSITE-ProRule" id="PRU00258"/>
    </source>
</evidence>
<gene>
    <name evidence="1" type="primary">acpP</name>
    <name type="ordered locus">HSM_0035</name>
</gene>
<dbReference type="EMBL" id="CP000947">
    <property type="protein sequence ID" value="ACA31985.1"/>
    <property type="molecule type" value="Genomic_DNA"/>
</dbReference>
<dbReference type="RefSeq" id="WP_011608321.1">
    <property type="nucleotide sequence ID" value="NC_010519.1"/>
</dbReference>
<dbReference type="SMR" id="B0UUZ3"/>
<dbReference type="STRING" id="228400.HSM_0035"/>
<dbReference type="GeneID" id="31486310"/>
<dbReference type="KEGG" id="hsm:HSM_0035"/>
<dbReference type="HOGENOM" id="CLU_108696_5_1_6"/>
<dbReference type="UniPathway" id="UPA00094"/>
<dbReference type="GO" id="GO:0005829">
    <property type="term" value="C:cytosol"/>
    <property type="evidence" value="ECO:0007669"/>
    <property type="project" value="TreeGrafter"/>
</dbReference>
<dbReference type="GO" id="GO:0016020">
    <property type="term" value="C:membrane"/>
    <property type="evidence" value="ECO:0007669"/>
    <property type="project" value="GOC"/>
</dbReference>
<dbReference type="GO" id="GO:0000035">
    <property type="term" value="F:acyl binding"/>
    <property type="evidence" value="ECO:0007669"/>
    <property type="project" value="TreeGrafter"/>
</dbReference>
<dbReference type="GO" id="GO:0000036">
    <property type="term" value="F:acyl carrier activity"/>
    <property type="evidence" value="ECO:0007669"/>
    <property type="project" value="UniProtKB-UniRule"/>
</dbReference>
<dbReference type="GO" id="GO:0009245">
    <property type="term" value="P:lipid A biosynthetic process"/>
    <property type="evidence" value="ECO:0007669"/>
    <property type="project" value="TreeGrafter"/>
</dbReference>
<dbReference type="FunFam" id="1.10.1200.10:FF:000001">
    <property type="entry name" value="Acyl carrier protein"/>
    <property type="match status" value="1"/>
</dbReference>
<dbReference type="Gene3D" id="1.10.1200.10">
    <property type="entry name" value="ACP-like"/>
    <property type="match status" value="1"/>
</dbReference>
<dbReference type="HAMAP" id="MF_01217">
    <property type="entry name" value="Acyl_carrier"/>
    <property type="match status" value="1"/>
</dbReference>
<dbReference type="InterPro" id="IPR003231">
    <property type="entry name" value="ACP"/>
</dbReference>
<dbReference type="InterPro" id="IPR036736">
    <property type="entry name" value="ACP-like_sf"/>
</dbReference>
<dbReference type="InterPro" id="IPR009081">
    <property type="entry name" value="PP-bd_ACP"/>
</dbReference>
<dbReference type="InterPro" id="IPR006162">
    <property type="entry name" value="Ppantetheine_attach_site"/>
</dbReference>
<dbReference type="NCBIfam" id="TIGR00517">
    <property type="entry name" value="acyl_carrier"/>
    <property type="match status" value="1"/>
</dbReference>
<dbReference type="NCBIfam" id="NF002148">
    <property type="entry name" value="PRK00982.1-2"/>
    <property type="match status" value="1"/>
</dbReference>
<dbReference type="NCBIfam" id="NF002149">
    <property type="entry name" value="PRK00982.1-3"/>
    <property type="match status" value="1"/>
</dbReference>
<dbReference type="NCBIfam" id="NF002150">
    <property type="entry name" value="PRK00982.1-4"/>
    <property type="match status" value="1"/>
</dbReference>
<dbReference type="NCBIfam" id="NF002151">
    <property type="entry name" value="PRK00982.1-5"/>
    <property type="match status" value="1"/>
</dbReference>
<dbReference type="PANTHER" id="PTHR20863">
    <property type="entry name" value="ACYL CARRIER PROTEIN"/>
    <property type="match status" value="1"/>
</dbReference>
<dbReference type="PANTHER" id="PTHR20863:SF76">
    <property type="entry name" value="CARRIER DOMAIN-CONTAINING PROTEIN"/>
    <property type="match status" value="1"/>
</dbReference>
<dbReference type="Pfam" id="PF00550">
    <property type="entry name" value="PP-binding"/>
    <property type="match status" value="1"/>
</dbReference>
<dbReference type="SUPFAM" id="SSF47336">
    <property type="entry name" value="ACP-like"/>
    <property type="match status" value="1"/>
</dbReference>
<dbReference type="PROSITE" id="PS50075">
    <property type="entry name" value="CARRIER"/>
    <property type="match status" value="1"/>
</dbReference>
<dbReference type="PROSITE" id="PS00012">
    <property type="entry name" value="PHOSPHOPANTETHEINE"/>
    <property type="match status" value="1"/>
</dbReference>
<keyword id="KW-0963">Cytoplasm</keyword>
<keyword id="KW-0275">Fatty acid biosynthesis</keyword>
<keyword id="KW-0276">Fatty acid metabolism</keyword>
<keyword id="KW-0444">Lipid biosynthesis</keyword>
<keyword id="KW-0443">Lipid metabolism</keyword>
<keyword id="KW-0596">Phosphopantetheine</keyword>
<keyword id="KW-0597">Phosphoprotein</keyword>
<name>ACP_HISS2</name>
<organism>
    <name type="scientific">Histophilus somni (strain 2336)</name>
    <name type="common">Haemophilus somnus</name>
    <dbReference type="NCBI Taxonomy" id="228400"/>
    <lineage>
        <taxon>Bacteria</taxon>
        <taxon>Pseudomonadati</taxon>
        <taxon>Pseudomonadota</taxon>
        <taxon>Gammaproteobacteria</taxon>
        <taxon>Pasteurellales</taxon>
        <taxon>Pasteurellaceae</taxon>
        <taxon>Histophilus</taxon>
    </lineage>
</organism>
<comment type="function">
    <text evidence="1">Carrier of the growing fatty acid chain in fatty acid biosynthesis.</text>
</comment>
<comment type="pathway">
    <text evidence="1">Lipid metabolism; fatty acid biosynthesis.</text>
</comment>
<comment type="subcellular location">
    <subcellularLocation>
        <location evidence="1">Cytoplasm</location>
    </subcellularLocation>
</comment>
<comment type="PTM">
    <text evidence="1">4'-phosphopantetheine is transferred from CoA to a specific serine of apo-ACP by AcpS. This modification is essential for activity because fatty acids are bound in thioester linkage to the sulfhydryl of the prosthetic group.</text>
</comment>
<comment type="similarity">
    <text evidence="1">Belongs to the acyl carrier protein (ACP) family.</text>
</comment>